<name>PIMT_RHIME</name>
<feature type="chain" id="PRO_0000111900" description="Protein-L-isoaspartate O-methyltransferase">
    <location>
        <begin position="1"/>
        <end position="204"/>
    </location>
</feature>
<feature type="sequence conflict" description="In Ref. 1; AAB88075." evidence="2" ref="1">
    <original>L</original>
    <variation>F</variation>
    <location>
        <position position="26"/>
    </location>
</feature>
<accession>O08249</accession>
<evidence type="ECO:0000250" key="1"/>
<evidence type="ECO:0000305" key="2"/>
<organism>
    <name type="scientific">Rhizobium meliloti (strain 1021)</name>
    <name type="common">Ensifer meliloti</name>
    <name type="synonym">Sinorhizobium meliloti</name>
    <dbReference type="NCBI Taxonomy" id="266834"/>
    <lineage>
        <taxon>Bacteria</taxon>
        <taxon>Pseudomonadati</taxon>
        <taxon>Pseudomonadota</taxon>
        <taxon>Alphaproteobacteria</taxon>
        <taxon>Hyphomicrobiales</taxon>
        <taxon>Rhizobiaceae</taxon>
        <taxon>Sinorhizobium/Ensifer group</taxon>
        <taxon>Sinorhizobium</taxon>
    </lineage>
</organism>
<reference key="1">
    <citation type="journal article" date="1997" name="Mol. Plant Microbe Interact.">
        <title>A biotin-regulated locus, bioS, in a possible survival operon of Rhizobium meliloti.</title>
        <authorList>
            <person name="Streit W.R."/>
            <person name="Phillips D.A."/>
        </authorList>
    </citation>
    <scope>NUCLEOTIDE SEQUENCE [GENOMIC DNA]</scope>
    <source>
        <strain>1021</strain>
    </source>
</reference>
<reference key="2">
    <citation type="journal article" date="2001" name="Proc. Natl. Acad. Sci. U.S.A.">
        <title>Analysis of the chromosome sequence of the legume symbiont Sinorhizobium meliloti strain 1021.</title>
        <authorList>
            <person name="Capela D."/>
            <person name="Barloy-Hubler F."/>
            <person name="Gouzy J."/>
            <person name="Bothe G."/>
            <person name="Ampe F."/>
            <person name="Batut J."/>
            <person name="Boistard P."/>
            <person name="Becker A."/>
            <person name="Boutry M."/>
            <person name="Cadieu E."/>
            <person name="Dreano S."/>
            <person name="Gloux S."/>
            <person name="Godrie T."/>
            <person name="Goffeau A."/>
            <person name="Kahn D."/>
            <person name="Kiss E."/>
            <person name="Lelaure V."/>
            <person name="Masuy D."/>
            <person name="Pohl T."/>
            <person name="Portetelle D."/>
            <person name="Puehler A."/>
            <person name="Purnelle B."/>
            <person name="Ramsperger U."/>
            <person name="Renard C."/>
            <person name="Thebault P."/>
            <person name="Vandenbol M."/>
            <person name="Weidner S."/>
            <person name="Galibert F."/>
        </authorList>
    </citation>
    <scope>NUCLEOTIDE SEQUENCE [LARGE SCALE GENOMIC DNA]</scope>
    <source>
        <strain>1021</strain>
    </source>
</reference>
<reference key="3">
    <citation type="journal article" date="2001" name="Science">
        <title>The composite genome of the legume symbiont Sinorhizobium meliloti.</title>
        <authorList>
            <person name="Galibert F."/>
            <person name="Finan T.M."/>
            <person name="Long S.R."/>
            <person name="Puehler A."/>
            <person name="Abola P."/>
            <person name="Ampe F."/>
            <person name="Barloy-Hubler F."/>
            <person name="Barnett M.J."/>
            <person name="Becker A."/>
            <person name="Boistard P."/>
            <person name="Bothe G."/>
            <person name="Boutry M."/>
            <person name="Bowser L."/>
            <person name="Buhrmester J."/>
            <person name="Cadieu E."/>
            <person name="Capela D."/>
            <person name="Chain P."/>
            <person name="Cowie A."/>
            <person name="Davis R.W."/>
            <person name="Dreano S."/>
            <person name="Federspiel N.A."/>
            <person name="Fisher R.F."/>
            <person name="Gloux S."/>
            <person name="Godrie T."/>
            <person name="Goffeau A."/>
            <person name="Golding B."/>
            <person name="Gouzy J."/>
            <person name="Gurjal M."/>
            <person name="Hernandez-Lucas I."/>
            <person name="Hong A."/>
            <person name="Huizar L."/>
            <person name="Hyman R.W."/>
            <person name="Jones T."/>
            <person name="Kahn D."/>
            <person name="Kahn M.L."/>
            <person name="Kalman S."/>
            <person name="Keating D.H."/>
            <person name="Kiss E."/>
            <person name="Komp C."/>
            <person name="Lelaure V."/>
            <person name="Masuy D."/>
            <person name="Palm C."/>
            <person name="Peck M.C."/>
            <person name="Pohl T.M."/>
            <person name="Portetelle D."/>
            <person name="Purnelle B."/>
            <person name="Ramsperger U."/>
            <person name="Surzycki R."/>
            <person name="Thebault P."/>
            <person name="Vandenbol M."/>
            <person name="Vorhoelter F.J."/>
            <person name="Weidner S."/>
            <person name="Wells D.H."/>
            <person name="Wong K."/>
            <person name="Yeh K.-C."/>
            <person name="Batut J."/>
        </authorList>
    </citation>
    <scope>NUCLEOTIDE SEQUENCE [LARGE SCALE GENOMIC DNA]</scope>
    <source>
        <strain>1021</strain>
    </source>
</reference>
<gene>
    <name type="primary">pcm</name>
    <name type="ordered locus">R01534</name>
    <name type="ORF">SMc02062</name>
</gene>
<keyword id="KW-0963">Cytoplasm</keyword>
<keyword id="KW-0489">Methyltransferase</keyword>
<keyword id="KW-1185">Reference proteome</keyword>
<keyword id="KW-0949">S-adenosyl-L-methionine</keyword>
<keyword id="KW-0808">Transferase</keyword>
<protein>
    <recommendedName>
        <fullName>Protein-L-isoaspartate O-methyltransferase</fullName>
        <ecNumber>2.1.1.77</ecNumber>
    </recommendedName>
    <alternativeName>
        <fullName>L-isoaspartyl protein carboxyl methyltransferase</fullName>
    </alternativeName>
    <alternativeName>
        <fullName>Protein L-isoaspartyl methyltransferase</fullName>
    </alternativeName>
    <alternativeName>
        <fullName>Protein-beta-aspartate methyltransferase</fullName>
        <shortName>PIMT</shortName>
    </alternativeName>
</protein>
<sequence length="204" mass="22427">MALRLRSGGIVNHELLKAVEQTPRTLFAPPQYQDEVYSKRLIPLECGSFMEGCDMAVRLLHCLNLKPGQRILEVGTGSGFTAAVMGRIAERVLTIDRYQTLVASAQKNLEKAGLRNVVVRQADGSAGVPGEGTFDRILITAAFNSLPRTFSDHLVSGGTLLVPIMMSETHCRIVRVNRTGSRFDREDLFDAPYLPIVPQVASFL</sequence>
<proteinExistence type="inferred from homology"/>
<comment type="function">
    <text evidence="1">Catalyzes the methyl esterification of L-isoaspartyl residues in peptides and proteins that result from spontaneous decomposition of normal L-aspartyl and L-asparaginyl residues. It plays a role in the repair and/or degradation of damaged proteins (By similarity).</text>
</comment>
<comment type="catalytic activity">
    <reaction>
        <text>[protein]-L-isoaspartate + S-adenosyl-L-methionine = [protein]-L-isoaspartate alpha-methyl ester + S-adenosyl-L-homocysteine</text>
        <dbReference type="Rhea" id="RHEA:12705"/>
        <dbReference type="Rhea" id="RHEA-COMP:12143"/>
        <dbReference type="Rhea" id="RHEA-COMP:12144"/>
        <dbReference type="ChEBI" id="CHEBI:57856"/>
        <dbReference type="ChEBI" id="CHEBI:59789"/>
        <dbReference type="ChEBI" id="CHEBI:90596"/>
        <dbReference type="ChEBI" id="CHEBI:90598"/>
        <dbReference type="EC" id="2.1.1.77"/>
    </reaction>
</comment>
<comment type="subunit">
    <text evidence="1">Monomer.</text>
</comment>
<comment type="subcellular location">
    <subcellularLocation>
        <location evidence="1">Cytoplasm</location>
    </subcellularLocation>
</comment>
<comment type="similarity">
    <text evidence="2">Belongs to the methyltransferase superfamily. L-isoaspartyl/D-aspartyl protein methyltransferase family.</text>
</comment>
<comment type="caution">
    <text evidence="2">Glu-51 is present instead of the conserved Ser which is expected to be the active site residue.</text>
</comment>
<dbReference type="EC" id="2.1.1.77"/>
<dbReference type="EMBL" id="U81296">
    <property type="protein sequence ID" value="AAB88075.1"/>
    <property type="molecule type" value="Genomic_DNA"/>
</dbReference>
<dbReference type="EMBL" id="AL591688">
    <property type="protein sequence ID" value="CAC46113.1"/>
    <property type="molecule type" value="Genomic_DNA"/>
</dbReference>
<dbReference type="RefSeq" id="NP_385640.1">
    <property type="nucleotide sequence ID" value="NC_003047.1"/>
</dbReference>
<dbReference type="SMR" id="O08249"/>
<dbReference type="EnsemblBacteria" id="CAC46113">
    <property type="protein sequence ID" value="CAC46113"/>
    <property type="gene ID" value="SMc02062"/>
</dbReference>
<dbReference type="KEGG" id="sme:SMc02062"/>
<dbReference type="PATRIC" id="fig|266834.11.peg.2957"/>
<dbReference type="eggNOG" id="COG2518">
    <property type="taxonomic scope" value="Bacteria"/>
</dbReference>
<dbReference type="HOGENOM" id="CLU_055432_2_0_5"/>
<dbReference type="OrthoDB" id="9810066at2"/>
<dbReference type="Proteomes" id="UP000001976">
    <property type="component" value="Chromosome"/>
</dbReference>
<dbReference type="GO" id="GO:0005737">
    <property type="term" value="C:cytoplasm"/>
    <property type="evidence" value="ECO:0007669"/>
    <property type="project" value="UniProtKB-SubCell"/>
</dbReference>
<dbReference type="GO" id="GO:0004719">
    <property type="term" value="F:protein-L-isoaspartate (D-aspartate) O-methyltransferase activity"/>
    <property type="evidence" value="ECO:0007669"/>
    <property type="project" value="UniProtKB-EC"/>
</dbReference>
<dbReference type="GO" id="GO:0032259">
    <property type="term" value="P:methylation"/>
    <property type="evidence" value="ECO:0007669"/>
    <property type="project" value="UniProtKB-KW"/>
</dbReference>
<dbReference type="GO" id="GO:0036211">
    <property type="term" value="P:protein modification process"/>
    <property type="evidence" value="ECO:0007669"/>
    <property type="project" value="InterPro"/>
</dbReference>
<dbReference type="CDD" id="cd02440">
    <property type="entry name" value="AdoMet_MTases"/>
    <property type="match status" value="1"/>
</dbReference>
<dbReference type="Gene3D" id="3.40.50.150">
    <property type="entry name" value="Vaccinia Virus protein VP39"/>
    <property type="match status" value="1"/>
</dbReference>
<dbReference type="InterPro" id="IPR000682">
    <property type="entry name" value="PCMT"/>
</dbReference>
<dbReference type="InterPro" id="IPR029063">
    <property type="entry name" value="SAM-dependent_MTases_sf"/>
</dbReference>
<dbReference type="NCBIfam" id="NF001453">
    <property type="entry name" value="PRK00312.1"/>
    <property type="match status" value="1"/>
</dbReference>
<dbReference type="PANTHER" id="PTHR11579">
    <property type="entry name" value="PROTEIN-L-ISOASPARTATE O-METHYLTRANSFERASE"/>
    <property type="match status" value="1"/>
</dbReference>
<dbReference type="PANTHER" id="PTHR11579:SF0">
    <property type="entry name" value="PROTEIN-L-ISOASPARTATE(D-ASPARTATE) O-METHYLTRANSFERASE"/>
    <property type="match status" value="1"/>
</dbReference>
<dbReference type="Pfam" id="PF01135">
    <property type="entry name" value="PCMT"/>
    <property type="match status" value="1"/>
</dbReference>
<dbReference type="SUPFAM" id="SSF53335">
    <property type="entry name" value="S-adenosyl-L-methionine-dependent methyltransferases"/>
    <property type="match status" value="1"/>
</dbReference>
<dbReference type="PROSITE" id="PS01279">
    <property type="entry name" value="PCMT"/>
    <property type="match status" value="1"/>
</dbReference>